<dbReference type="EC" id="2.8.4.4" evidence="1"/>
<dbReference type="EMBL" id="CP000879">
    <property type="protein sequence ID" value="ABX30827.1"/>
    <property type="molecule type" value="Genomic_DNA"/>
</dbReference>
<dbReference type="RefSeq" id="WP_012207934.1">
    <property type="nucleotide sequence ID" value="NC_010003.1"/>
</dbReference>
<dbReference type="SMR" id="A9BEU9"/>
<dbReference type="STRING" id="403833.Pmob_0078"/>
<dbReference type="KEGG" id="pmo:Pmob_0078"/>
<dbReference type="eggNOG" id="COG0621">
    <property type="taxonomic scope" value="Bacteria"/>
</dbReference>
<dbReference type="HOGENOM" id="CLU_018697_0_1_0"/>
<dbReference type="OrthoDB" id="9805215at2"/>
<dbReference type="Proteomes" id="UP000000789">
    <property type="component" value="Chromosome"/>
</dbReference>
<dbReference type="GO" id="GO:0005829">
    <property type="term" value="C:cytosol"/>
    <property type="evidence" value="ECO:0007669"/>
    <property type="project" value="TreeGrafter"/>
</dbReference>
<dbReference type="GO" id="GO:0051539">
    <property type="term" value="F:4 iron, 4 sulfur cluster binding"/>
    <property type="evidence" value="ECO:0007669"/>
    <property type="project" value="UniProtKB-UniRule"/>
</dbReference>
<dbReference type="GO" id="GO:0035599">
    <property type="term" value="F:aspartic acid methylthiotransferase activity"/>
    <property type="evidence" value="ECO:0007669"/>
    <property type="project" value="TreeGrafter"/>
</dbReference>
<dbReference type="GO" id="GO:0046872">
    <property type="term" value="F:metal ion binding"/>
    <property type="evidence" value="ECO:0007669"/>
    <property type="project" value="UniProtKB-KW"/>
</dbReference>
<dbReference type="GO" id="GO:0103039">
    <property type="term" value="F:protein methylthiotransferase activity"/>
    <property type="evidence" value="ECO:0007669"/>
    <property type="project" value="UniProtKB-EC"/>
</dbReference>
<dbReference type="GO" id="GO:0006400">
    <property type="term" value="P:tRNA modification"/>
    <property type="evidence" value="ECO:0007669"/>
    <property type="project" value="InterPro"/>
</dbReference>
<dbReference type="CDD" id="cd01335">
    <property type="entry name" value="Radical_SAM"/>
    <property type="match status" value="1"/>
</dbReference>
<dbReference type="FunFam" id="2.40.50.140:FF:000210">
    <property type="entry name" value="Ribosomal protein S12 methylthiotransferase RimO"/>
    <property type="match status" value="1"/>
</dbReference>
<dbReference type="FunFam" id="3.80.30.20:FF:000001">
    <property type="entry name" value="tRNA-2-methylthio-N(6)-dimethylallyladenosine synthase 2"/>
    <property type="match status" value="1"/>
</dbReference>
<dbReference type="Gene3D" id="3.40.50.12160">
    <property type="entry name" value="Methylthiotransferase, N-terminal domain"/>
    <property type="match status" value="1"/>
</dbReference>
<dbReference type="Gene3D" id="2.40.50.140">
    <property type="entry name" value="Nucleic acid-binding proteins"/>
    <property type="match status" value="1"/>
</dbReference>
<dbReference type="Gene3D" id="3.80.30.20">
    <property type="entry name" value="tm_1862 like domain"/>
    <property type="match status" value="1"/>
</dbReference>
<dbReference type="HAMAP" id="MF_01865">
    <property type="entry name" value="MTTase_RimO"/>
    <property type="match status" value="1"/>
</dbReference>
<dbReference type="InterPro" id="IPR006638">
    <property type="entry name" value="Elp3/MiaA/NifB-like_rSAM"/>
</dbReference>
<dbReference type="InterPro" id="IPR005839">
    <property type="entry name" value="Methylthiotransferase"/>
</dbReference>
<dbReference type="InterPro" id="IPR020612">
    <property type="entry name" value="Methylthiotransferase_CS"/>
</dbReference>
<dbReference type="InterPro" id="IPR013848">
    <property type="entry name" value="Methylthiotransferase_N"/>
</dbReference>
<dbReference type="InterPro" id="IPR038135">
    <property type="entry name" value="Methylthiotransferase_N_sf"/>
</dbReference>
<dbReference type="InterPro" id="IPR012340">
    <property type="entry name" value="NA-bd_OB-fold"/>
</dbReference>
<dbReference type="InterPro" id="IPR005840">
    <property type="entry name" value="Ribosomal_uS12_MeSTrfase_RimO"/>
</dbReference>
<dbReference type="InterPro" id="IPR007197">
    <property type="entry name" value="rSAM"/>
</dbReference>
<dbReference type="InterPro" id="IPR023404">
    <property type="entry name" value="rSAM_horseshoe"/>
</dbReference>
<dbReference type="InterPro" id="IPR002792">
    <property type="entry name" value="TRAM_dom"/>
</dbReference>
<dbReference type="NCBIfam" id="TIGR01125">
    <property type="entry name" value="30S ribosomal protein S12 methylthiotransferase RimO"/>
    <property type="match status" value="1"/>
</dbReference>
<dbReference type="NCBIfam" id="TIGR00089">
    <property type="entry name" value="MiaB/RimO family radical SAM methylthiotransferase"/>
    <property type="match status" value="1"/>
</dbReference>
<dbReference type="PANTHER" id="PTHR43837">
    <property type="entry name" value="RIBOSOMAL PROTEIN S12 METHYLTHIOTRANSFERASE RIMO"/>
    <property type="match status" value="1"/>
</dbReference>
<dbReference type="PANTHER" id="PTHR43837:SF1">
    <property type="entry name" value="RIBOSOMAL PROTEIN US12 METHYLTHIOTRANSFERASE RIMO"/>
    <property type="match status" value="1"/>
</dbReference>
<dbReference type="Pfam" id="PF04055">
    <property type="entry name" value="Radical_SAM"/>
    <property type="match status" value="1"/>
</dbReference>
<dbReference type="Pfam" id="PF18693">
    <property type="entry name" value="TRAM_2"/>
    <property type="match status" value="1"/>
</dbReference>
<dbReference type="Pfam" id="PF00919">
    <property type="entry name" value="UPF0004"/>
    <property type="match status" value="1"/>
</dbReference>
<dbReference type="SFLD" id="SFLDG01082">
    <property type="entry name" value="B12-binding_domain_containing"/>
    <property type="match status" value="1"/>
</dbReference>
<dbReference type="SFLD" id="SFLDS00029">
    <property type="entry name" value="Radical_SAM"/>
    <property type="match status" value="1"/>
</dbReference>
<dbReference type="SFLD" id="SFLDF00274">
    <property type="entry name" value="ribosomal_protein_S12_methylth"/>
    <property type="match status" value="1"/>
</dbReference>
<dbReference type="SMART" id="SM00729">
    <property type="entry name" value="Elp3"/>
    <property type="match status" value="1"/>
</dbReference>
<dbReference type="SUPFAM" id="SSF102114">
    <property type="entry name" value="Radical SAM enzymes"/>
    <property type="match status" value="1"/>
</dbReference>
<dbReference type="PROSITE" id="PS51449">
    <property type="entry name" value="MTTASE_N"/>
    <property type="match status" value="1"/>
</dbReference>
<dbReference type="PROSITE" id="PS01278">
    <property type="entry name" value="MTTASE_RADICAL"/>
    <property type="match status" value="1"/>
</dbReference>
<dbReference type="PROSITE" id="PS51918">
    <property type="entry name" value="RADICAL_SAM"/>
    <property type="match status" value="1"/>
</dbReference>
<dbReference type="PROSITE" id="PS50926">
    <property type="entry name" value="TRAM"/>
    <property type="match status" value="1"/>
</dbReference>
<sequence>MKKFHIVKLGCPKNDADMEIFKGLLQSKGYKYESNPQLANYIFIDTCGFIEEAKKESIETIFEYVSLKDNNKNLKVIPIGCLTQRYFDDILKDIPEIDGLYGVLSPKTIVEKIENGEYFFKRDIPETLYDCKIRAIPDSHYAYVKIGDGCSRNCAFCSIPTFKGKPKSRSIEEINEEVEFLVSKGVKEIILVSQDNTLYGIDNYQKQALPDLLDKLNNIKGKFWIRVMYLHPDFLSEEIIESIHRNEKVLNYFDVPIQHISDKILQSMGRHKKRNELIKLFEKIRKEPSAIRTTLMVGFPGEKAEDFEELVDFVKEIKFERMGSFIFSKEENTKSFTLPEQIDEQIKKQRQNELMTVQSEISKNIMEKYIGETLEVLLEEKEDNVYVGRSYLDAPEIDGNVYIKNFGDKELTFGNFVKVTITGSYEYDLEGEIVE</sequence>
<organism>
    <name type="scientific">Petrotoga mobilis (strain DSM 10674 / SJ95)</name>
    <dbReference type="NCBI Taxonomy" id="403833"/>
    <lineage>
        <taxon>Bacteria</taxon>
        <taxon>Thermotogati</taxon>
        <taxon>Thermotogota</taxon>
        <taxon>Thermotogae</taxon>
        <taxon>Petrotogales</taxon>
        <taxon>Petrotogaceae</taxon>
        <taxon>Petrotoga</taxon>
    </lineage>
</organism>
<protein>
    <recommendedName>
        <fullName evidence="1">Ribosomal protein uS12 methylthiotransferase RimO</fullName>
        <shortName evidence="1">uS12 MTTase</shortName>
        <shortName evidence="1">uS12 methylthiotransferase</shortName>
        <ecNumber evidence="1">2.8.4.4</ecNumber>
    </recommendedName>
    <alternativeName>
        <fullName evidence="1">Ribosomal protein uS12 (aspartate-C(3))-methylthiotransferase</fullName>
    </alternativeName>
    <alternativeName>
        <fullName evidence="1">Ribosome maturation factor RimO</fullName>
    </alternativeName>
</protein>
<proteinExistence type="inferred from homology"/>
<evidence type="ECO:0000255" key="1">
    <source>
        <dbReference type="HAMAP-Rule" id="MF_01865"/>
    </source>
</evidence>
<evidence type="ECO:0000255" key="2">
    <source>
        <dbReference type="PROSITE-ProRule" id="PRU01266"/>
    </source>
</evidence>
<keyword id="KW-0004">4Fe-4S</keyword>
<keyword id="KW-0963">Cytoplasm</keyword>
<keyword id="KW-0408">Iron</keyword>
<keyword id="KW-0411">Iron-sulfur</keyword>
<keyword id="KW-0479">Metal-binding</keyword>
<keyword id="KW-0949">S-adenosyl-L-methionine</keyword>
<keyword id="KW-0808">Transferase</keyword>
<feature type="chain" id="PRO_0000374918" description="Ribosomal protein uS12 methylthiotransferase RimO">
    <location>
        <begin position="1"/>
        <end position="435"/>
    </location>
</feature>
<feature type="domain" description="MTTase N-terminal" evidence="1">
    <location>
        <begin position="2"/>
        <end position="118"/>
    </location>
</feature>
<feature type="domain" description="Radical SAM core" evidence="2">
    <location>
        <begin position="136"/>
        <end position="364"/>
    </location>
</feature>
<feature type="domain" description="TRAM" evidence="1">
    <location>
        <begin position="367"/>
        <end position="435"/>
    </location>
</feature>
<feature type="binding site" evidence="1">
    <location>
        <position position="11"/>
    </location>
    <ligand>
        <name>[4Fe-4S] cluster</name>
        <dbReference type="ChEBI" id="CHEBI:49883"/>
        <label>1</label>
    </ligand>
</feature>
<feature type="binding site" evidence="1">
    <location>
        <position position="47"/>
    </location>
    <ligand>
        <name>[4Fe-4S] cluster</name>
        <dbReference type="ChEBI" id="CHEBI:49883"/>
        <label>1</label>
    </ligand>
</feature>
<feature type="binding site" evidence="1">
    <location>
        <position position="81"/>
    </location>
    <ligand>
        <name>[4Fe-4S] cluster</name>
        <dbReference type="ChEBI" id="CHEBI:49883"/>
        <label>1</label>
    </ligand>
</feature>
<feature type="binding site" evidence="1">
    <location>
        <position position="150"/>
    </location>
    <ligand>
        <name>[4Fe-4S] cluster</name>
        <dbReference type="ChEBI" id="CHEBI:49883"/>
        <label>2</label>
        <note>4Fe-4S-S-AdoMet</note>
    </ligand>
</feature>
<feature type="binding site" evidence="1">
    <location>
        <position position="154"/>
    </location>
    <ligand>
        <name>[4Fe-4S] cluster</name>
        <dbReference type="ChEBI" id="CHEBI:49883"/>
        <label>2</label>
        <note>4Fe-4S-S-AdoMet</note>
    </ligand>
</feature>
<feature type="binding site" evidence="1">
    <location>
        <position position="157"/>
    </location>
    <ligand>
        <name>[4Fe-4S] cluster</name>
        <dbReference type="ChEBI" id="CHEBI:49883"/>
        <label>2</label>
        <note>4Fe-4S-S-AdoMet</note>
    </ligand>
</feature>
<reference key="1">
    <citation type="submission" date="2007-11" db="EMBL/GenBank/DDBJ databases">
        <title>Complete sequence of Petroga mobilis SJ95.</title>
        <authorList>
            <consortium name="US DOE Joint Genome Institute"/>
            <person name="Copeland A."/>
            <person name="Lucas S."/>
            <person name="Lapidus A."/>
            <person name="Barry K."/>
            <person name="Glavina del Rio T."/>
            <person name="Dalin E."/>
            <person name="Tice H."/>
            <person name="Pitluck S."/>
            <person name="Meincke L."/>
            <person name="Brettin T."/>
            <person name="Bruce D."/>
            <person name="Detter J.C."/>
            <person name="Han C."/>
            <person name="Kuske C.R."/>
            <person name="Schmutz J."/>
            <person name="Larimer F."/>
            <person name="Land M."/>
            <person name="Hauser L."/>
            <person name="Kyrpides N."/>
            <person name="Mikhailova N."/>
            <person name="Noll K."/>
            <person name="Richardson P."/>
        </authorList>
    </citation>
    <scope>NUCLEOTIDE SEQUENCE [LARGE SCALE GENOMIC DNA]</scope>
    <source>
        <strain>DSM 10674 / SJ95</strain>
    </source>
</reference>
<comment type="function">
    <text evidence="1">Catalyzes the methylthiolation of an aspartic acid residue of ribosomal protein uS12.</text>
</comment>
<comment type="catalytic activity">
    <reaction evidence="1">
        <text>L-aspartate(89)-[ribosomal protein uS12]-hydrogen + (sulfur carrier)-SH + AH2 + 2 S-adenosyl-L-methionine = 3-methylsulfanyl-L-aspartate(89)-[ribosomal protein uS12]-hydrogen + (sulfur carrier)-H + 5'-deoxyadenosine + L-methionine + A + S-adenosyl-L-homocysteine + 2 H(+)</text>
        <dbReference type="Rhea" id="RHEA:37087"/>
        <dbReference type="Rhea" id="RHEA-COMP:10460"/>
        <dbReference type="Rhea" id="RHEA-COMP:10461"/>
        <dbReference type="Rhea" id="RHEA-COMP:14737"/>
        <dbReference type="Rhea" id="RHEA-COMP:14739"/>
        <dbReference type="ChEBI" id="CHEBI:13193"/>
        <dbReference type="ChEBI" id="CHEBI:15378"/>
        <dbReference type="ChEBI" id="CHEBI:17319"/>
        <dbReference type="ChEBI" id="CHEBI:17499"/>
        <dbReference type="ChEBI" id="CHEBI:29917"/>
        <dbReference type="ChEBI" id="CHEBI:29961"/>
        <dbReference type="ChEBI" id="CHEBI:57844"/>
        <dbReference type="ChEBI" id="CHEBI:57856"/>
        <dbReference type="ChEBI" id="CHEBI:59789"/>
        <dbReference type="ChEBI" id="CHEBI:64428"/>
        <dbReference type="ChEBI" id="CHEBI:73599"/>
        <dbReference type="EC" id="2.8.4.4"/>
    </reaction>
</comment>
<comment type="cofactor">
    <cofactor evidence="1">
        <name>[4Fe-4S] cluster</name>
        <dbReference type="ChEBI" id="CHEBI:49883"/>
    </cofactor>
    <text evidence="1">Binds 2 [4Fe-4S] clusters. One cluster is coordinated with 3 cysteines and an exchangeable S-adenosyl-L-methionine.</text>
</comment>
<comment type="subcellular location">
    <subcellularLocation>
        <location evidence="1">Cytoplasm</location>
    </subcellularLocation>
</comment>
<comment type="similarity">
    <text evidence="1">Belongs to the methylthiotransferase family. RimO subfamily.</text>
</comment>
<gene>
    <name evidence="1" type="primary">rimO</name>
    <name type="ordered locus">Pmob_0078</name>
</gene>
<name>RIMO_PETMO</name>
<accession>A9BEU9</accession>